<keyword id="KW-0687">Ribonucleoprotein</keyword>
<keyword id="KW-0689">Ribosomal protein</keyword>
<keyword id="KW-0694">RNA-binding</keyword>
<keyword id="KW-0699">rRNA-binding</keyword>
<reference key="1">
    <citation type="journal article" date="2005" name="J. Bacteriol.">
        <title>Completion of the genome sequence of Brucella abortus and comparison to the highly similar genomes of Brucella melitensis and Brucella suis.</title>
        <authorList>
            <person name="Halling S.M."/>
            <person name="Peterson-Burch B.D."/>
            <person name="Bricker B.J."/>
            <person name="Zuerner R.L."/>
            <person name="Qing Z."/>
            <person name="Li L.-L."/>
            <person name="Kapur V."/>
            <person name="Alt D.P."/>
            <person name="Olsen S.C."/>
        </authorList>
    </citation>
    <scope>NUCLEOTIDE SEQUENCE [LARGE SCALE GENOMIC DNA]</scope>
    <source>
        <strain>9-941</strain>
    </source>
</reference>
<evidence type="ECO:0000255" key="1">
    <source>
        <dbReference type="HAMAP-Rule" id="MF_00531"/>
    </source>
</evidence>
<evidence type="ECO:0000305" key="2"/>
<gene>
    <name evidence="1" type="primary">rpsS</name>
    <name type="ordered locus">BruAb1_1234</name>
</gene>
<name>RS19_BRUAB</name>
<dbReference type="EMBL" id="AE017223">
    <property type="protein sequence ID" value="AAX74572.1"/>
    <property type="molecule type" value="Genomic_DNA"/>
</dbReference>
<dbReference type="RefSeq" id="WP_002964358.1">
    <property type="nucleotide sequence ID" value="NC_006932.1"/>
</dbReference>
<dbReference type="SMR" id="Q57CR2"/>
<dbReference type="EnsemblBacteria" id="AAX74572">
    <property type="protein sequence ID" value="AAX74572"/>
    <property type="gene ID" value="BruAb1_1234"/>
</dbReference>
<dbReference type="GeneID" id="97533528"/>
<dbReference type="KEGG" id="bmb:BruAb1_1234"/>
<dbReference type="HOGENOM" id="CLU_144911_0_1_5"/>
<dbReference type="Proteomes" id="UP000000540">
    <property type="component" value="Chromosome I"/>
</dbReference>
<dbReference type="GO" id="GO:0005737">
    <property type="term" value="C:cytoplasm"/>
    <property type="evidence" value="ECO:0007669"/>
    <property type="project" value="UniProtKB-ARBA"/>
</dbReference>
<dbReference type="GO" id="GO:0015935">
    <property type="term" value="C:small ribosomal subunit"/>
    <property type="evidence" value="ECO:0007669"/>
    <property type="project" value="InterPro"/>
</dbReference>
<dbReference type="GO" id="GO:0019843">
    <property type="term" value="F:rRNA binding"/>
    <property type="evidence" value="ECO:0007669"/>
    <property type="project" value="UniProtKB-UniRule"/>
</dbReference>
<dbReference type="GO" id="GO:0003735">
    <property type="term" value="F:structural constituent of ribosome"/>
    <property type="evidence" value="ECO:0007669"/>
    <property type="project" value="InterPro"/>
</dbReference>
<dbReference type="GO" id="GO:0000028">
    <property type="term" value="P:ribosomal small subunit assembly"/>
    <property type="evidence" value="ECO:0007669"/>
    <property type="project" value="TreeGrafter"/>
</dbReference>
<dbReference type="GO" id="GO:0006412">
    <property type="term" value="P:translation"/>
    <property type="evidence" value="ECO:0007669"/>
    <property type="project" value="UniProtKB-UniRule"/>
</dbReference>
<dbReference type="FunFam" id="3.30.860.10:FF:000001">
    <property type="entry name" value="30S ribosomal protein S19"/>
    <property type="match status" value="1"/>
</dbReference>
<dbReference type="Gene3D" id="3.30.860.10">
    <property type="entry name" value="30s Ribosomal Protein S19, Chain A"/>
    <property type="match status" value="1"/>
</dbReference>
<dbReference type="HAMAP" id="MF_00531">
    <property type="entry name" value="Ribosomal_uS19"/>
    <property type="match status" value="1"/>
</dbReference>
<dbReference type="InterPro" id="IPR002222">
    <property type="entry name" value="Ribosomal_uS19"/>
</dbReference>
<dbReference type="InterPro" id="IPR005732">
    <property type="entry name" value="Ribosomal_uS19_bac-type"/>
</dbReference>
<dbReference type="InterPro" id="IPR020934">
    <property type="entry name" value="Ribosomal_uS19_CS"/>
</dbReference>
<dbReference type="InterPro" id="IPR023575">
    <property type="entry name" value="Ribosomal_uS19_SF"/>
</dbReference>
<dbReference type="NCBIfam" id="TIGR01050">
    <property type="entry name" value="rpsS_bact"/>
    <property type="match status" value="1"/>
</dbReference>
<dbReference type="PANTHER" id="PTHR11880">
    <property type="entry name" value="RIBOSOMAL PROTEIN S19P FAMILY MEMBER"/>
    <property type="match status" value="1"/>
</dbReference>
<dbReference type="PANTHER" id="PTHR11880:SF8">
    <property type="entry name" value="SMALL RIBOSOMAL SUBUNIT PROTEIN US19M"/>
    <property type="match status" value="1"/>
</dbReference>
<dbReference type="Pfam" id="PF00203">
    <property type="entry name" value="Ribosomal_S19"/>
    <property type="match status" value="1"/>
</dbReference>
<dbReference type="PIRSF" id="PIRSF002144">
    <property type="entry name" value="Ribosomal_S19"/>
    <property type="match status" value="1"/>
</dbReference>
<dbReference type="PRINTS" id="PR00975">
    <property type="entry name" value="RIBOSOMALS19"/>
</dbReference>
<dbReference type="SUPFAM" id="SSF54570">
    <property type="entry name" value="Ribosomal protein S19"/>
    <property type="match status" value="1"/>
</dbReference>
<dbReference type="PROSITE" id="PS00323">
    <property type="entry name" value="RIBOSOMAL_S19"/>
    <property type="match status" value="1"/>
</dbReference>
<comment type="function">
    <text evidence="1">Protein S19 forms a complex with S13 that binds strongly to the 16S ribosomal RNA.</text>
</comment>
<comment type="similarity">
    <text evidence="1">Belongs to the universal ribosomal protein uS19 family.</text>
</comment>
<protein>
    <recommendedName>
        <fullName evidence="1">Small ribosomal subunit protein uS19</fullName>
    </recommendedName>
    <alternativeName>
        <fullName evidence="2">30S ribosomal protein S19</fullName>
    </alternativeName>
</protein>
<accession>Q57CR2</accession>
<proteinExistence type="inferred from homology"/>
<feature type="chain" id="PRO_0000265333" description="Small ribosomal subunit protein uS19">
    <location>
        <begin position="1"/>
        <end position="92"/>
    </location>
</feature>
<organism>
    <name type="scientific">Brucella abortus biovar 1 (strain 9-941)</name>
    <dbReference type="NCBI Taxonomy" id="262698"/>
    <lineage>
        <taxon>Bacteria</taxon>
        <taxon>Pseudomonadati</taxon>
        <taxon>Pseudomonadota</taxon>
        <taxon>Alphaproteobacteria</taxon>
        <taxon>Hyphomicrobiales</taxon>
        <taxon>Brucellaceae</taxon>
        <taxon>Brucella/Ochrobactrum group</taxon>
        <taxon>Brucella</taxon>
    </lineage>
</organism>
<sequence>MARSVWKGPFVDGYLLKKAEKVREGGRNEVIKMWSRRSTILPQFVGLTFGVYNGNKHVPVSVSEEMVGHKFGEFAPTRTYYGHGADKKAKRK</sequence>